<name>TRPD_NEIG1</name>
<evidence type="ECO:0000255" key="1">
    <source>
        <dbReference type="HAMAP-Rule" id="MF_00211"/>
    </source>
</evidence>
<comment type="function">
    <text evidence="1">Catalyzes the transfer of the phosphoribosyl group of 5-phosphorylribose-1-pyrophosphate (PRPP) to anthranilate to yield N-(5'-phosphoribosyl)-anthranilate (PRA).</text>
</comment>
<comment type="catalytic activity">
    <reaction evidence="1">
        <text>N-(5-phospho-beta-D-ribosyl)anthranilate + diphosphate = 5-phospho-alpha-D-ribose 1-diphosphate + anthranilate</text>
        <dbReference type="Rhea" id="RHEA:11768"/>
        <dbReference type="ChEBI" id="CHEBI:16567"/>
        <dbReference type="ChEBI" id="CHEBI:18277"/>
        <dbReference type="ChEBI" id="CHEBI:33019"/>
        <dbReference type="ChEBI" id="CHEBI:58017"/>
        <dbReference type="EC" id="2.4.2.18"/>
    </reaction>
</comment>
<comment type="cofactor">
    <cofactor evidence="1">
        <name>Mg(2+)</name>
        <dbReference type="ChEBI" id="CHEBI:18420"/>
    </cofactor>
    <text evidence="1">Binds 2 magnesium ions per monomer.</text>
</comment>
<comment type="pathway">
    <text evidence="1">Amino-acid biosynthesis; L-tryptophan biosynthesis; L-tryptophan from chorismate: step 2/5.</text>
</comment>
<comment type="subunit">
    <text evidence="1">Homodimer.</text>
</comment>
<comment type="similarity">
    <text evidence="1">Belongs to the anthranilate phosphoribosyltransferase family.</text>
</comment>
<proteinExistence type="inferred from homology"/>
<accession>Q5F7H5</accession>
<dbReference type="EC" id="2.4.2.18" evidence="1"/>
<dbReference type="EMBL" id="AE004969">
    <property type="protein sequence ID" value="AAW89862.1"/>
    <property type="molecule type" value="Genomic_DNA"/>
</dbReference>
<dbReference type="RefSeq" id="WP_010358628.1">
    <property type="nucleotide sequence ID" value="NC_002946.2"/>
</dbReference>
<dbReference type="RefSeq" id="YP_208274.1">
    <property type="nucleotide sequence ID" value="NC_002946.2"/>
</dbReference>
<dbReference type="SMR" id="Q5F7H5"/>
<dbReference type="STRING" id="242231.NGO_1203"/>
<dbReference type="GeneID" id="66752518"/>
<dbReference type="KEGG" id="ngo:NGO_1203"/>
<dbReference type="PATRIC" id="fig|242231.10.peg.1411"/>
<dbReference type="HOGENOM" id="CLU_034315_2_1_4"/>
<dbReference type="UniPathway" id="UPA00035">
    <property type="reaction ID" value="UER00041"/>
</dbReference>
<dbReference type="Proteomes" id="UP000000535">
    <property type="component" value="Chromosome"/>
</dbReference>
<dbReference type="GO" id="GO:0005829">
    <property type="term" value="C:cytosol"/>
    <property type="evidence" value="ECO:0007669"/>
    <property type="project" value="TreeGrafter"/>
</dbReference>
<dbReference type="GO" id="GO:0004048">
    <property type="term" value="F:anthranilate phosphoribosyltransferase activity"/>
    <property type="evidence" value="ECO:0007669"/>
    <property type="project" value="UniProtKB-UniRule"/>
</dbReference>
<dbReference type="GO" id="GO:0000287">
    <property type="term" value="F:magnesium ion binding"/>
    <property type="evidence" value="ECO:0007669"/>
    <property type="project" value="UniProtKB-UniRule"/>
</dbReference>
<dbReference type="GO" id="GO:0000162">
    <property type="term" value="P:L-tryptophan biosynthetic process"/>
    <property type="evidence" value="ECO:0007669"/>
    <property type="project" value="UniProtKB-UniRule"/>
</dbReference>
<dbReference type="FunFam" id="1.20.970.10:FF:000006">
    <property type="entry name" value="Anthranilate phosphoribosyltransferase"/>
    <property type="match status" value="1"/>
</dbReference>
<dbReference type="FunFam" id="3.40.1030.10:FF:000002">
    <property type="entry name" value="Anthranilate phosphoribosyltransferase"/>
    <property type="match status" value="1"/>
</dbReference>
<dbReference type="Gene3D" id="3.40.1030.10">
    <property type="entry name" value="Nucleoside phosphorylase/phosphoribosyltransferase catalytic domain"/>
    <property type="match status" value="1"/>
</dbReference>
<dbReference type="Gene3D" id="1.20.970.10">
    <property type="entry name" value="Transferase, Pyrimidine Nucleoside Phosphorylase, Chain C"/>
    <property type="match status" value="1"/>
</dbReference>
<dbReference type="HAMAP" id="MF_00211">
    <property type="entry name" value="TrpD"/>
    <property type="match status" value="1"/>
</dbReference>
<dbReference type="InterPro" id="IPR005940">
    <property type="entry name" value="Anthranilate_Pribosyl_Tfrase"/>
</dbReference>
<dbReference type="InterPro" id="IPR000312">
    <property type="entry name" value="Glycosyl_Trfase_fam3"/>
</dbReference>
<dbReference type="InterPro" id="IPR017459">
    <property type="entry name" value="Glycosyl_Trfase_fam3_N_dom"/>
</dbReference>
<dbReference type="InterPro" id="IPR036320">
    <property type="entry name" value="Glycosyl_Trfase_fam3_N_dom_sf"/>
</dbReference>
<dbReference type="InterPro" id="IPR035902">
    <property type="entry name" value="Nuc_phospho_transferase"/>
</dbReference>
<dbReference type="NCBIfam" id="TIGR01245">
    <property type="entry name" value="trpD"/>
    <property type="match status" value="1"/>
</dbReference>
<dbReference type="PANTHER" id="PTHR43285">
    <property type="entry name" value="ANTHRANILATE PHOSPHORIBOSYLTRANSFERASE"/>
    <property type="match status" value="1"/>
</dbReference>
<dbReference type="PANTHER" id="PTHR43285:SF2">
    <property type="entry name" value="ANTHRANILATE PHOSPHORIBOSYLTRANSFERASE"/>
    <property type="match status" value="1"/>
</dbReference>
<dbReference type="Pfam" id="PF02885">
    <property type="entry name" value="Glycos_trans_3N"/>
    <property type="match status" value="1"/>
</dbReference>
<dbReference type="Pfam" id="PF00591">
    <property type="entry name" value="Glycos_transf_3"/>
    <property type="match status" value="1"/>
</dbReference>
<dbReference type="SUPFAM" id="SSF52418">
    <property type="entry name" value="Nucleoside phosphorylase/phosphoribosyltransferase catalytic domain"/>
    <property type="match status" value="1"/>
</dbReference>
<dbReference type="SUPFAM" id="SSF47648">
    <property type="entry name" value="Nucleoside phosphorylase/phosphoribosyltransferase N-terminal domain"/>
    <property type="match status" value="1"/>
</dbReference>
<feature type="chain" id="PRO_0000227170" description="Anthranilate phosphoribosyltransferase">
    <location>
        <begin position="1"/>
        <end position="342"/>
    </location>
</feature>
<feature type="binding site" evidence="1">
    <location>
        <position position="83"/>
    </location>
    <ligand>
        <name>5-phospho-alpha-D-ribose 1-diphosphate</name>
        <dbReference type="ChEBI" id="CHEBI:58017"/>
    </ligand>
</feature>
<feature type="binding site" evidence="1">
    <location>
        <position position="83"/>
    </location>
    <ligand>
        <name>anthranilate</name>
        <dbReference type="ChEBI" id="CHEBI:16567"/>
        <label>1</label>
    </ligand>
</feature>
<feature type="binding site" evidence="1">
    <location>
        <begin position="86"/>
        <end position="87"/>
    </location>
    <ligand>
        <name>5-phospho-alpha-D-ribose 1-diphosphate</name>
        <dbReference type="ChEBI" id="CHEBI:58017"/>
    </ligand>
</feature>
<feature type="binding site" evidence="1">
    <location>
        <position position="91"/>
    </location>
    <ligand>
        <name>5-phospho-alpha-D-ribose 1-diphosphate</name>
        <dbReference type="ChEBI" id="CHEBI:58017"/>
    </ligand>
</feature>
<feature type="binding site" evidence="1">
    <location>
        <begin position="93"/>
        <end position="96"/>
    </location>
    <ligand>
        <name>5-phospho-alpha-D-ribose 1-diphosphate</name>
        <dbReference type="ChEBI" id="CHEBI:58017"/>
    </ligand>
</feature>
<feature type="binding site" evidence="1">
    <location>
        <position position="95"/>
    </location>
    <ligand>
        <name>Mg(2+)</name>
        <dbReference type="ChEBI" id="CHEBI:18420"/>
        <label>1</label>
    </ligand>
</feature>
<feature type="binding site" evidence="1">
    <location>
        <begin position="111"/>
        <end position="119"/>
    </location>
    <ligand>
        <name>5-phospho-alpha-D-ribose 1-diphosphate</name>
        <dbReference type="ChEBI" id="CHEBI:58017"/>
    </ligand>
</feature>
<feature type="binding site" evidence="1">
    <location>
        <position position="123"/>
    </location>
    <ligand>
        <name>5-phospho-alpha-D-ribose 1-diphosphate</name>
        <dbReference type="ChEBI" id="CHEBI:58017"/>
    </ligand>
</feature>
<feature type="binding site" evidence="1">
    <location>
        <position position="169"/>
    </location>
    <ligand>
        <name>anthranilate</name>
        <dbReference type="ChEBI" id="CHEBI:16567"/>
        <label>2</label>
    </ligand>
</feature>
<feature type="binding site" evidence="1">
    <location>
        <position position="228"/>
    </location>
    <ligand>
        <name>Mg(2+)</name>
        <dbReference type="ChEBI" id="CHEBI:18420"/>
        <label>2</label>
    </ligand>
</feature>
<feature type="binding site" evidence="1">
    <location>
        <position position="229"/>
    </location>
    <ligand>
        <name>Mg(2+)</name>
        <dbReference type="ChEBI" id="CHEBI:18420"/>
        <label>1</label>
    </ligand>
</feature>
<feature type="binding site" evidence="1">
    <location>
        <position position="229"/>
    </location>
    <ligand>
        <name>Mg(2+)</name>
        <dbReference type="ChEBI" id="CHEBI:18420"/>
        <label>2</label>
    </ligand>
</feature>
<gene>
    <name evidence="1" type="primary">trpD</name>
    <name type="ordered locus">NGO_1203</name>
</gene>
<sequence>MITPQQAIERLISNNELFYDEMTDLMRQMMSGKVPPEQIAAILTGLRIKVETVSEITAAAAVMCEFASKVPLEDADGLVDIVGTGGDGAKTFNISTTSMFVAAAAGAKVAKHGGRSVSSSSGAADVMEQMGANLNLTPEQIAQSIRQTGIGFMFAPNHHSAMRHVAPVRRSLGFRSIFNILGPLTNPAGAPNQLLGVFHTDLCGILSRVLQQLGSKHVLVVCGEGGLDEITLTGKTRVAELKDGKISEYDIRPEDFGIETRRNLDEIKVANTQESLLKMNEVLDGKEGAARDIVLLNTAAALYAGNIAASLSDGISAAREGIDSGRAKAKKEEFVGFTRQFA</sequence>
<organism>
    <name type="scientific">Neisseria gonorrhoeae (strain ATCC 700825 / FA 1090)</name>
    <dbReference type="NCBI Taxonomy" id="242231"/>
    <lineage>
        <taxon>Bacteria</taxon>
        <taxon>Pseudomonadati</taxon>
        <taxon>Pseudomonadota</taxon>
        <taxon>Betaproteobacteria</taxon>
        <taxon>Neisseriales</taxon>
        <taxon>Neisseriaceae</taxon>
        <taxon>Neisseria</taxon>
    </lineage>
</organism>
<reference key="1">
    <citation type="submission" date="2003-03" db="EMBL/GenBank/DDBJ databases">
        <title>The complete genome sequence of Neisseria gonorrhoeae.</title>
        <authorList>
            <person name="Lewis L.A."/>
            <person name="Gillaspy A.F."/>
            <person name="McLaughlin R.E."/>
            <person name="Gipson M."/>
            <person name="Ducey T.F."/>
            <person name="Ownbey T."/>
            <person name="Hartman K."/>
            <person name="Nydick C."/>
            <person name="Carson M.B."/>
            <person name="Vaughn J."/>
            <person name="Thomson C."/>
            <person name="Song L."/>
            <person name="Lin S."/>
            <person name="Yuan X."/>
            <person name="Najar F."/>
            <person name="Zhan M."/>
            <person name="Ren Q."/>
            <person name="Zhu H."/>
            <person name="Qi S."/>
            <person name="Kenton S.M."/>
            <person name="Lai H."/>
            <person name="White J.D."/>
            <person name="Clifton S."/>
            <person name="Roe B.A."/>
            <person name="Dyer D.W."/>
        </authorList>
    </citation>
    <scope>NUCLEOTIDE SEQUENCE [LARGE SCALE GENOMIC DNA]</scope>
    <source>
        <strain>ATCC 700825 / FA 1090</strain>
    </source>
</reference>
<keyword id="KW-0028">Amino-acid biosynthesis</keyword>
<keyword id="KW-0057">Aromatic amino acid biosynthesis</keyword>
<keyword id="KW-0328">Glycosyltransferase</keyword>
<keyword id="KW-0460">Magnesium</keyword>
<keyword id="KW-0479">Metal-binding</keyword>
<keyword id="KW-1185">Reference proteome</keyword>
<keyword id="KW-0808">Transferase</keyword>
<keyword id="KW-0822">Tryptophan biosynthesis</keyword>
<protein>
    <recommendedName>
        <fullName evidence="1">Anthranilate phosphoribosyltransferase</fullName>
        <ecNumber evidence="1">2.4.2.18</ecNumber>
    </recommendedName>
</protein>